<evidence type="ECO:0000250" key="1"/>
<evidence type="ECO:0000250" key="2">
    <source>
        <dbReference type="UniProtKB" id="O60906"/>
    </source>
</evidence>
<evidence type="ECO:0000255" key="3"/>
<evidence type="ECO:0000256" key="4">
    <source>
        <dbReference type="SAM" id="MobiDB-lite"/>
    </source>
</evidence>
<evidence type="ECO:0000269" key="5">
    <source>
    </source>
</evidence>
<evidence type="ECO:0000305" key="6"/>
<keyword id="KW-0378">Hydrolase</keyword>
<keyword id="KW-0443">Lipid metabolism</keyword>
<keyword id="KW-0460">Magnesium</keyword>
<keyword id="KW-0472">Membrane</keyword>
<keyword id="KW-0479">Metal-binding</keyword>
<keyword id="KW-1185">Reference proteome</keyword>
<keyword id="KW-0746">Sphingolipid metabolism</keyword>
<keyword id="KW-0812">Transmembrane</keyword>
<keyword id="KW-1133">Transmembrane helix</keyword>
<reference key="1">
    <citation type="journal article" date="2000" name="Biochim. Biophys. Acta">
        <title>Cloning and expression of rat neutral sphingomyelinase: enzymological characterization and identification of essential histidine residues.</title>
        <authorList>
            <person name="Mizutani Y."/>
            <person name="Tamiya-Koizumi K."/>
            <person name="Irie F."/>
            <person name="Hirabayashi Y."/>
            <person name="Miwa M."/>
            <person name="Yoshida S."/>
        </authorList>
    </citation>
    <scope>NUCLEOTIDE SEQUENCE [MRNA]</scope>
    <scope>CHARACTERIZATION</scope>
    <scope>MUTAGENESIS</scope>
    <source>
        <strain>Sprague-Dawley</strain>
        <tissue>Liver</tissue>
    </source>
</reference>
<reference key="2">
    <citation type="journal article" date="2004" name="Genome Res.">
        <title>The status, quality, and expansion of the NIH full-length cDNA project: the Mammalian Gene Collection (MGC).</title>
        <authorList>
            <consortium name="The MGC Project Team"/>
        </authorList>
    </citation>
    <scope>NUCLEOTIDE SEQUENCE [LARGE SCALE MRNA]</scope>
    <source>
        <tissue>Spleen</tissue>
    </source>
</reference>
<gene>
    <name type="primary">Smpd2</name>
</gene>
<protein>
    <recommendedName>
        <fullName>Sphingomyelin phosphodiesterase 2</fullName>
        <ecNumber>3.1.4.12</ecNumber>
    </recommendedName>
    <alternativeName>
        <fullName>Lyso-platelet-activating factor-phospholipase C</fullName>
        <shortName>Lyso-PAF-PLC</shortName>
    </alternativeName>
    <alternativeName>
        <fullName>Neutral sphingomyelinase</fullName>
        <shortName>N-SMase</shortName>
        <shortName>nSMase</shortName>
    </alternativeName>
</protein>
<organism>
    <name type="scientific">Rattus norvegicus</name>
    <name type="common">Rat</name>
    <dbReference type="NCBI Taxonomy" id="10116"/>
    <lineage>
        <taxon>Eukaryota</taxon>
        <taxon>Metazoa</taxon>
        <taxon>Chordata</taxon>
        <taxon>Craniata</taxon>
        <taxon>Vertebrata</taxon>
        <taxon>Euteleostomi</taxon>
        <taxon>Mammalia</taxon>
        <taxon>Eutheria</taxon>
        <taxon>Euarchontoglires</taxon>
        <taxon>Glires</taxon>
        <taxon>Rodentia</taxon>
        <taxon>Myomorpha</taxon>
        <taxon>Muroidea</taxon>
        <taxon>Muridae</taxon>
        <taxon>Murinae</taxon>
        <taxon>Rattus</taxon>
    </lineage>
</organism>
<sequence length="422" mass="47645">MKHNFSLRLRVFNLNCWDIPYLSKHRADRMKRLGDFLNLESFDLALLEEVWSEQDFQYLKQKLSLTYPDAHYFRSGIIGSGLCVFSRHPIQEIVQHVYTLNGYPYKFYHGDWFCGKAVGLLVLHLSGLVLNAYVTHLHAEYSRQKDIYFAHRVAQAWELAQFIHHTSKKANVVLLCGDLNMHPKDLGCCLLKEWTGLRDAFVETEDFKGSEDGCTMVPKNCYVSQQDLGPFPFGVRIDYVLYKAVSGFHICCKTLKTTTGCDPHNGTPFSDHEALMATLCVKHSPPQEDPCSAHGSAERSALISALREARTELGRGIAQARWWAALFGYVMILGLSLLVLLCVLAAGEEAREVAIMLWTPSVGLVLGAGAVYLFHKQEAKSLCRAQAEIQHVLTRTTETQDLGSEPHPTHCRQQEADRAEEK</sequence>
<accession>Q9ET64</accession>
<accession>Q5BKB2</accession>
<dbReference type="EC" id="3.1.4.12"/>
<dbReference type="EMBL" id="AB047002">
    <property type="protein sequence ID" value="BAB08219.1"/>
    <property type="molecule type" value="mRNA"/>
</dbReference>
<dbReference type="EMBL" id="BC091139">
    <property type="protein sequence ID" value="AAH91139.1"/>
    <property type="molecule type" value="mRNA"/>
</dbReference>
<dbReference type="RefSeq" id="NP_112650.1">
    <property type="nucleotide sequence ID" value="NM_031360.2"/>
</dbReference>
<dbReference type="SMR" id="Q9ET64"/>
<dbReference type="FunCoup" id="Q9ET64">
    <property type="interactions" value="1033"/>
</dbReference>
<dbReference type="STRING" id="10116.ENSRNOP00000000336"/>
<dbReference type="BindingDB" id="Q9ET64"/>
<dbReference type="ChEMBL" id="CHEMBL3528"/>
<dbReference type="PhosphoSitePlus" id="Q9ET64"/>
<dbReference type="PaxDb" id="10116-ENSRNOP00000000336"/>
<dbReference type="Ensembl" id="ENSRNOT00000000336.6">
    <property type="protein sequence ID" value="ENSRNOP00000000336.3"/>
    <property type="gene ID" value="ENSRNOG00000000306.6"/>
</dbReference>
<dbReference type="GeneID" id="83537"/>
<dbReference type="KEGG" id="rno:83537"/>
<dbReference type="AGR" id="RGD:619753"/>
<dbReference type="CTD" id="6610"/>
<dbReference type="RGD" id="619753">
    <property type="gene designation" value="Smpd2"/>
</dbReference>
<dbReference type="eggNOG" id="KOG3873">
    <property type="taxonomic scope" value="Eukaryota"/>
</dbReference>
<dbReference type="GeneTree" id="ENSGT00390000009166"/>
<dbReference type="HOGENOM" id="CLU_034001_4_0_1"/>
<dbReference type="InParanoid" id="Q9ET64"/>
<dbReference type="OrthoDB" id="387657at2759"/>
<dbReference type="PhylomeDB" id="Q9ET64"/>
<dbReference type="TreeFam" id="TF313899"/>
<dbReference type="BRENDA" id="3.1.4.12">
    <property type="organism ID" value="5301"/>
</dbReference>
<dbReference type="Reactome" id="R-RNO-5626978">
    <property type="pathway name" value="TNFR1-mediated ceramide production"/>
</dbReference>
<dbReference type="Reactome" id="R-RNO-9840310">
    <property type="pathway name" value="Glycosphingolipid catabolism"/>
</dbReference>
<dbReference type="SABIO-RK" id="Q9ET64"/>
<dbReference type="UniPathway" id="UPA00222"/>
<dbReference type="PRO" id="PR:Q9ET64"/>
<dbReference type="Proteomes" id="UP000002494">
    <property type="component" value="Chromosome 20"/>
</dbReference>
<dbReference type="Bgee" id="ENSRNOG00000000306">
    <property type="expression patterns" value="Expressed in jejunum and 20 other cell types or tissues"/>
</dbReference>
<dbReference type="GO" id="GO:0005901">
    <property type="term" value="C:caveola"/>
    <property type="evidence" value="ECO:0000314"/>
    <property type="project" value="RGD"/>
</dbReference>
<dbReference type="GO" id="GO:0071944">
    <property type="term" value="C:cell periphery"/>
    <property type="evidence" value="ECO:0000318"/>
    <property type="project" value="GO_Central"/>
</dbReference>
<dbReference type="GO" id="GO:0005783">
    <property type="term" value="C:endoplasmic reticulum"/>
    <property type="evidence" value="ECO:0000318"/>
    <property type="project" value="GO_Central"/>
</dbReference>
<dbReference type="GO" id="GO:0005886">
    <property type="term" value="C:plasma membrane"/>
    <property type="evidence" value="ECO:0000266"/>
    <property type="project" value="RGD"/>
</dbReference>
<dbReference type="GO" id="GO:0046872">
    <property type="term" value="F:metal ion binding"/>
    <property type="evidence" value="ECO:0007669"/>
    <property type="project" value="UniProtKB-KW"/>
</dbReference>
<dbReference type="GO" id="GO:0008081">
    <property type="term" value="F:phosphoric diester hydrolase activity"/>
    <property type="evidence" value="ECO:0000266"/>
    <property type="project" value="RGD"/>
</dbReference>
<dbReference type="GO" id="GO:0004767">
    <property type="term" value="F:sphingomyelin phosphodiesterase activity"/>
    <property type="evidence" value="ECO:0000314"/>
    <property type="project" value="RGD"/>
</dbReference>
<dbReference type="GO" id="GO:0046513">
    <property type="term" value="P:ceramide biosynthetic process"/>
    <property type="evidence" value="ECO:0000314"/>
    <property type="project" value="RGD"/>
</dbReference>
<dbReference type="GO" id="GO:0006672">
    <property type="term" value="P:ceramide metabolic process"/>
    <property type="evidence" value="ECO:0000266"/>
    <property type="project" value="RGD"/>
</dbReference>
<dbReference type="GO" id="GO:0035556">
    <property type="term" value="P:intracellular signal transduction"/>
    <property type="evidence" value="ECO:0000315"/>
    <property type="project" value="RGD"/>
</dbReference>
<dbReference type="GO" id="GO:0009612">
    <property type="term" value="P:response to mechanical stimulus"/>
    <property type="evidence" value="ECO:0000315"/>
    <property type="project" value="RGD"/>
</dbReference>
<dbReference type="GO" id="GO:0030149">
    <property type="term" value="P:sphingolipid catabolic process"/>
    <property type="evidence" value="ECO:0000318"/>
    <property type="project" value="GO_Central"/>
</dbReference>
<dbReference type="GO" id="GO:0006685">
    <property type="term" value="P:sphingomyelin catabolic process"/>
    <property type="evidence" value="ECO:0000266"/>
    <property type="project" value="RGD"/>
</dbReference>
<dbReference type="GO" id="GO:0006684">
    <property type="term" value="P:sphingomyelin metabolic process"/>
    <property type="evidence" value="ECO:0000318"/>
    <property type="project" value="GO_Central"/>
</dbReference>
<dbReference type="FunFam" id="3.60.10.10:FF:000033">
    <property type="entry name" value="sphingomyelin phosphodiesterase 2"/>
    <property type="match status" value="1"/>
</dbReference>
<dbReference type="Gene3D" id="3.60.10.10">
    <property type="entry name" value="Endonuclease/exonuclease/phosphatase"/>
    <property type="match status" value="1"/>
</dbReference>
<dbReference type="InterPro" id="IPR036691">
    <property type="entry name" value="Endo/exonu/phosph_ase_sf"/>
</dbReference>
<dbReference type="InterPro" id="IPR005135">
    <property type="entry name" value="Endo/exonuclease/phosphatase"/>
</dbReference>
<dbReference type="InterPro" id="IPR038772">
    <property type="entry name" value="Sph/SMPD2-like"/>
</dbReference>
<dbReference type="PANTHER" id="PTHR16320:SF24">
    <property type="entry name" value="PHOSPHODIESTERASE, PUTATIVE-RELATED"/>
    <property type="match status" value="1"/>
</dbReference>
<dbReference type="PANTHER" id="PTHR16320">
    <property type="entry name" value="SPHINGOMYELINASE FAMILY MEMBER"/>
    <property type="match status" value="1"/>
</dbReference>
<dbReference type="Pfam" id="PF03372">
    <property type="entry name" value="Exo_endo_phos"/>
    <property type="match status" value="1"/>
</dbReference>
<dbReference type="SUPFAM" id="SSF56219">
    <property type="entry name" value="DNase I-like"/>
    <property type="match status" value="1"/>
</dbReference>
<name>NSMA_RAT</name>
<proteinExistence type="evidence at protein level"/>
<feature type="chain" id="PRO_0000075688" description="Sphingomyelin phosphodiesterase 2">
    <location>
        <begin position="1"/>
        <end position="422"/>
    </location>
</feature>
<feature type="transmembrane region" description="Helical" evidence="3">
    <location>
        <begin position="325"/>
        <end position="345"/>
    </location>
</feature>
<feature type="transmembrane region" description="Helical" evidence="3">
    <location>
        <begin position="354"/>
        <end position="374"/>
    </location>
</feature>
<feature type="region of interest" description="Disordered" evidence="4">
    <location>
        <begin position="397"/>
        <end position="422"/>
    </location>
</feature>
<feature type="compositionally biased region" description="Basic and acidic residues" evidence="4">
    <location>
        <begin position="412"/>
        <end position="422"/>
    </location>
</feature>
<feature type="active site" description="Proton acceptor" evidence="6">
    <location>
        <position position="272"/>
    </location>
</feature>
<feature type="binding site" evidence="1">
    <location>
        <position position="49"/>
    </location>
    <ligand>
        <name>Mg(2+)</name>
        <dbReference type="ChEBI" id="CHEBI:18420"/>
    </ligand>
</feature>
<feature type="site" description="Important for substrate recognition" evidence="1">
    <location>
        <position position="180"/>
    </location>
</feature>
<feature type="mutagenesis site" description="Complete loss of activity." evidence="5">
    <original>H</original>
    <variation>A</variation>
    <location>
        <position position="136"/>
    </location>
</feature>
<feature type="mutagenesis site" description="Reduced activity." evidence="5">
    <original>H</original>
    <variation>A</variation>
    <location>
        <position position="151"/>
    </location>
</feature>
<feature type="mutagenesis site" description="Complete loss of activity." evidence="5">
    <original>H</original>
    <variation>Y</variation>
    <location>
        <position position="151"/>
    </location>
</feature>
<feature type="mutagenesis site" description="Complete loss of activity." evidence="5">
    <original>H</original>
    <variation>A</variation>
    <location>
        <position position="272"/>
    </location>
</feature>
<comment type="function">
    <text evidence="2">Catalyzes the hydrolysis of sphingomyelin to form ceramide and phosphocholine. Ceramide mediates numerous cellular functions, such as apoptosis and growth arrest, and is capable of regulating these 2 cellular events independently. Also hydrolyzes sphingosylphosphocholine. Hydrolyze 1-acyl-2-lyso-sn-glycero-3-phosphocholine (lyso-PC) and 1-O-alkyl-2-lyso-sn-glycero-3-phosphocholine (lyso-platelet-activating factor).</text>
</comment>
<comment type="catalytic activity">
    <reaction evidence="2">
        <text>a sphingomyelin + H2O = phosphocholine + an N-acylsphing-4-enine + H(+)</text>
        <dbReference type="Rhea" id="RHEA:19253"/>
        <dbReference type="ChEBI" id="CHEBI:15377"/>
        <dbReference type="ChEBI" id="CHEBI:15378"/>
        <dbReference type="ChEBI" id="CHEBI:17636"/>
        <dbReference type="ChEBI" id="CHEBI:52639"/>
        <dbReference type="ChEBI" id="CHEBI:295975"/>
        <dbReference type="EC" id="3.1.4.12"/>
    </reaction>
</comment>
<comment type="catalytic activity">
    <reaction evidence="2">
        <text>1-O-octadecyl-sn-glycero-3-phosphocholine + H2O = 1-O-octadecyl-sn-glycerol + phosphocholine + H(+)</text>
        <dbReference type="Rhea" id="RHEA:39923"/>
        <dbReference type="ChEBI" id="CHEBI:15377"/>
        <dbReference type="ChEBI" id="CHEBI:15378"/>
        <dbReference type="ChEBI" id="CHEBI:74001"/>
        <dbReference type="ChEBI" id="CHEBI:75216"/>
        <dbReference type="ChEBI" id="CHEBI:295975"/>
    </reaction>
    <physiologicalReaction direction="left-to-right" evidence="2">
        <dbReference type="Rhea" id="RHEA:39924"/>
    </physiologicalReaction>
</comment>
<comment type="catalytic activity">
    <reaction evidence="2">
        <text>an N-(acyl)-sphingosylphosphocholine + H2O = an N-acyl-sphingoid base + phosphocholine + H(+)</text>
        <dbReference type="Rhea" id="RHEA:45300"/>
        <dbReference type="ChEBI" id="CHEBI:15377"/>
        <dbReference type="ChEBI" id="CHEBI:15378"/>
        <dbReference type="ChEBI" id="CHEBI:64583"/>
        <dbReference type="ChEBI" id="CHEBI:83273"/>
        <dbReference type="ChEBI" id="CHEBI:295975"/>
    </reaction>
    <physiologicalReaction direction="left-to-right" evidence="2">
        <dbReference type="Rhea" id="RHEA:45301"/>
    </physiologicalReaction>
</comment>
<comment type="catalytic activity">
    <reaction evidence="2">
        <text>1-hexadecanoyl-sn-glycero-3-phosphocholine + H2O = 1-hexadecanoyl-sn-glycerol + phosphocholine + H(+)</text>
        <dbReference type="Rhea" id="RHEA:41119"/>
        <dbReference type="ChEBI" id="CHEBI:15377"/>
        <dbReference type="ChEBI" id="CHEBI:15378"/>
        <dbReference type="ChEBI" id="CHEBI:72998"/>
        <dbReference type="ChEBI" id="CHEBI:75542"/>
        <dbReference type="ChEBI" id="CHEBI:295975"/>
    </reaction>
    <physiologicalReaction direction="left-to-right" evidence="2">
        <dbReference type="Rhea" id="RHEA:41120"/>
    </physiologicalReaction>
</comment>
<comment type="catalytic activity">
    <reaction evidence="2">
        <text>a sphingosylphosphocholine + H2O = a sphingoid base + phosphocholine + H(+)</text>
        <dbReference type="Rhea" id="RHEA:45296"/>
        <dbReference type="ChEBI" id="CHEBI:15377"/>
        <dbReference type="ChEBI" id="CHEBI:15378"/>
        <dbReference type="ChEBI" id="CHEBI:84410"/>
        <dbReference type="ChEBI" id="CHEBI:85171"/>
        <dbReference type="ChEBI" id="CHEBI:295975"/>
    </reaction>
    <physiologicalReaction direction="left-to-right" evidence="2">
        <dbReference type="Rhea" id="RHEA:45297"/>
    </physiologicalReaction>
</comment>
<comment type="catalytic activity">
    <reaction evidence="2">
        <text>1-O-hexadecyl-sn-glycero-3-phosphocholine + H2O = 1-O-hexadecyl-sn-glycerol + phosphocholine + H(+)</text>
        <dbReference type="Rhea" id="RHEA:36087"/>
        <dbReference type="ChEBI" id="CHEBI:15377"/>
        <dbReference type="ChEBI" id="CHEBI:15378"/>
        <dbReference type="ChEBI" id="CHEBI:34115"/>
        <dbReference type="ChEBI" id="CHEBI:64496"/>
        <dbReference type="ChEBI" id="CHEBI:295975"/>
    </reaction>
    <physiologicalReaction direction="left-to-right" evidence="2">
        <dbReference type="Rhea" id="RHEA:36088"/>
    </physiologicalReaction>
</comment>
<comment type="cofactor">
    <cofactor>
        <name>Mg(2+)</name>
        <dbReference type="ChEBI" id="CHEBI:18420"/>
    </cofactor>
</comment>
<comment type="pathway">
    <text evidence="2">Lipid metabolism; sphingolipid metabolism.</text>
</comment>
<comment type="subcellular location">
    <subcellularLocation>
        <location>Membrane</location>
        <topology>Multi-pass membrane protein</topology>
    </subcellularLocation>
</comment>
<comment type="similarity">
    <text evidence="6">Belongs to the neutral sphingomyelinase family.</text>
</comment>